<keyword id="KW-0903">Direct protein sequencing</keyword>
<keyword id="KW-0284">Flavonoid biosynthesis</keyword>
<keyword id="KW-0521">NADP</keyword>
<keyword id="KW-1185">Reference proteome</keyword>
<keyword id="KW-0808">Transferase</keyword>
<comment type="function">
    <text>Co-acts with chalcone synthase in formation of 4,2',4'-trihydroxychalcone, involved in the biosynthesis of glyceollin type phytoalexins.</text>
</comment>
<comment type="catalytic activity">
    <reaction>
        <text>4-coumaroyl-CoA + 3 malonyl-CoA + NADPH + 4 H(+) = isoliquiritigenin + 3 CO2 + NADP(+) + 4 CoA + H2O</text>
        <dbReference type="Rhea" id="RHEA:10584"/>
        <dbReference type="ChEBI" id="CHEBI:15377"/>
        <dbReference type="ChEBI" id="CHEBI:15378"/>
        <dbReference type="ChEBI" id="CHEBI:16526"/>
        <dbReference type="ChEBI" id="CHEBI:57287"/>
        <dbReference type="ChEBI" id="CHEBI:57355"/>
        <dbReference type="ChEBI" id="CHEBI:57384"/>
        <dbReference type="ChEBI" id="CHEBI:57783"/>
        <dbReference type="ChEBI" id="CHEBI:58349"/>
        <dbReference type="ChEBI" id="CHEBI:310312"/>
        <dbReference type="EC" id="2.3.1.170"/>
    </reaction>
</comment>
<comment type="pathway">
    <text>Phytoalexin biosynthesis; glyceollin biosynthesis.</text>
</comment>
<comment type="subunit">
    <text>Monomer.</text>
</comment>
<comment type="induction">
    <text>By pathogen infection.</text>
</comment>
<comment type="similarity">
    <text evidence="2">Belongs to the aldo/keto reductase family.</text>
</comment>
<dbReference type="EC" id="2.3.1.170"/>
<dbReference type="EMBL" id="X55730">
    <property type="protein sequence ID" value="CAA39261.1"/>
    <property type="molecule type" value="mRNA"/>
</dbReference>
<dbReference type="PIR" id="S14222">
    <property type="entry name" value="S14222"/>
</dbReference>
<dbReference type="RefSeq" id="NP_001235973.1">
    <property type="nucleotide sequence ID" value="NM_001249044.2"/>
</dbReference>
<dbReference type="SMR" id="P26690"/>
<dbReference type="STRING" id="3847.P26690"/>
<dbReference type="PaxDb" id="3847-GLYMA02G47750.1"/>
<dbReference type="ProMEX" id="P26690"/>
<dbReference type="GeneID" id="547911"/>
<dbReference type="KEGG" id="gmx:547911"/>
<dbReference type="eggNOG" id="KOG1577">
    <property type="taxonomic scope" value="Eukaryota"/>
</dbReference>
<dbReference type="InParanoid" id="P26690"/>
<dbReference type="OrthoDB" id="416253at2759"/>
<dbReference type="UniPathway" id="UPA00898"/>
<dbReference type="Proteomes" id="UP000008827">
    <property type="component" value="Unplaced"/>
</dbReference>
<dbReference type="GO" id="GO:0005829">
    <property type="term" value="C:cytosol"/>
    <property type="evidence" value="ECO:0000318"/>
    <property type="project" value="GO_Central"/>
</dbReference>
<dbReference type="GO" id="GO:0033808">
    <property type="term" value="F:6'-deoxychalcone synthase activity"/>
    <property type="evidence" value="ECO:0007669"/>
    <property type="project" value="UniProtKB-EC"/>
</dbReference>
<dbReference type="GO" id="GO:0004032">
    <property type="term" value="F:aldose reductase (NADPH) activity"/>
    <property type="evidence" value="ECO:0000318"/>
    <property type="project" value="GO_Central"/>
</dbReference>
<dbReference type="GO" id="GO:0009813">
    <property type="term" value="P:flavonoid biosynthetic process"/>
    <property type="evidence" value="ECO:0007669"/>
    <property type="project" value="UniProtKB-KW"/>
</dbReference>
<dbReference type="CDD" id="cd19124">
    <property type="entry name" value="AKR_AKR4A_4B"/>
    <property type="match status" value="1"/>
</dbReference>
<dbReference type="FunFam" id="3.20.20.100:FF:000013">
    <property type="entry name" value="NADPH-dependent codeinone reductase 1-1"/>
    <property type="match status" value="1"/>
</dbReference>
<dbReference type="Gene3D" id="3.20.20.100">
    <property type="entry name" value="NADP-dependent oxidoreductase domain"/>
    <property type="match status" value="1"/>
</dbReference>
<dbReference type="InterPro" id="IPR020471">
    <property type="entry name" value="AKR"/>
</dbReference>
<dbReference type="InterPro" id="IPR044497">
    <property type="entry name" value="AKR4A/B"/>
</dbReference>
<dbReference type="InterPro" id="IPR018170">
    <property type="entry name" value="Aldo/ket_reductase_CS"/>
</dbReference>
<dbReference type="InterPro" id="IPR023210">
    <property type="entry name" value="NADP_OxRdtase_dom"/>
</dbReference>
<dbReference type="InterPro" id="IPR036812">
    <property type="entry name" value="NADP_OxRdtase_dom_sf"/>
</dbReference>
<dbReference type="PANTHER" id="PTHR11732">
    <property type="entry name" value="ALDO/KETO REDUCTASE"/>
    <property type="match status" value="1"/>
</dbReference>
<dbReference type="Pfam" id="PF00248">
    <property type="entry name" value="Aldo_ket_red"/>
    <property type="match status" value="1"/>
</dbReference>
<dbReference type="PIRSF" id="PIRSF000097">
    <property type="entry name" value="AKR"/>
    <property type="match status" value="1"/>
</dbReference>
<dbReference type="PRINTS" id="PR00069">
    <property type="entry name" value="ALDKETRDTASE"/>
</dbReference>
<dbReference type="SUPFAM" id="SSF51430">
    <property type="entry name" value="NAD(P)-linked oxidoreductase"/>
    <property type="match status" value="1"/>
</dbReference>
<dbReference type="PROSITE" id="PS00798">
    <property type="entry name" value="ALDOKETO_REDUCTASE_1"/>
    <property type="match status" value="1"/>
</dbReference>
<dbReference type="PROSITE" id="PS00062">
    <property type="entry name" value="ALDOKETO_REDUCTASE_2"/>
    <property type="match status" value="1"/>
</dbReference>
<dbReference type="PROSITE" id="PS00063">
    <property type="entry name" value="ALDOKETO_REDUCTASE_3"/>
    <property type="match status" value="1"/>
</dbReference>
<accession>P26690</accession>
<name>6DCS_SOYBN</name>
<feature type="chain" id="PRO_0000124609" description="NAD(P)H-dependent 6'-deoxychalcone synthase">
    <location>
        <begin position="1"/>
        <end position="315"/>
    </location>
</feature>
<feature type="active site" description="Proton donor" evidence="1">
    <location>
        <position position="59"/>
    </location>
</feature>
<feature type="binding site" evidence="1">
    <location>
        <position position="121"/>
    </location>
    <ligand>
        <name>substrate</name>
    </ligand>
</feature>
<feature type="binding site" evidence="1">
    <location>
        <begin position="216"/>
        <end position="274"/>
    </location>
    <ligand>
        <name>NADP(+)</name>
        <dbReference type="ChEBI" id="CHEBI:58349"/>
    </ligand>
</feature>
<feature type="site" description="Lowers pKa of active site Tyr" evidence="1">
    <location>
        <position position="88"/>
    </location>
</feature>
<sequence>MAAAIEIPTIVFPNSSAQQRMPVVGMGSAPDFTCKKDTKEAIIEAVKQGYRHFDTAAAYGSEQALGEALKEAIHLGLVSRQDLFVTSKLWVTENHPHLVLPALRKSLKTLQLEYLDLYLIHWPLSSQPGKFSFPIEVEDLLPFDVKGVWESMEECQKLGLTKAIGVSNFSVKKLQNLLSVATIRPVVDQVEMNLAWQQKKLREFCKENGIIVTAFSPLRKGASRGPNEVMENDVLKEIAEAHGKSIAQVSLRWLYEQGVTFVPKSYDKERMNQNLHIFDWALTEQDHHKISQISQSRLISGPTKPQLADLWDDQI</sequence>
<organism>
    <name type="scientific">Glycine max</name>
    <name type="common">Soybean</name>
    <name type="synonym">Glycine hispida</name>
    <dbReference type="NCBI Taxonomy" id="3847"/>
    <lineage>
        <taxon>Eukaryota</taxon>
        <taxon>Viridiplantae</taxon>
        <taxon>Streptophyta</taxon>
        <taxon>Embryophyta</taxon>
        <taxon>Tracheophyta</taxon>
        <taxon>Spermatophyta</taxon>
        <taxon>Magnoliopsida</taxon>
        <taxon>eudicotyledons</taxon>
        <taxon>Gunneridae</taxon>
        <taxon>Pentapetalae</taxon>
        <taxon>rosids</taxon>
        <taxon>fabids</taxon>
        <taxon>Fabales</taxon>
        <taxon>Fabaceae</taxon>
        <taxon>Papilionoideae</taxon>
        <taxon>50 kb inversion clade</taxon>
        <taxon>NPAAA clade</taxon>
        <taxon>indigoferoid/millettioid clade</taxon>
        <taxon>Phaseoleae</taxon>
        <taxon>Glycine</taxon>
        <taxon>Glycine subgen. Soja</taxon>
    </lineage>
</organism>
<proteinExistence type="evidence at protein level"/>
<evidence type="ECO:0000250" key="1"/>
<evidence type="ECO:0000305" key="2"/>
<reference key="1">
    <citation type="journal article" date="1991" name="Eur. J. Biochem.">
        <title>Induced plant responses to pathogen attack. Analysis and heterologous expression of the key enzyme in the biosynthesis of phytoalexins in soybean (Glycine max L. Merr. cv. Harosoy 63).</title>
        <authorList>
            <person name="Welle R."/>
            <person name="Schroeder G."/>
            <person name="Schiltz E."/>
            <person name="Grisebach H."/>
            <person name="Schroeder J."/>
        </authorList>
    </citation>
    <scope>NUCLEOTIDE SEQUENCE [MRNA]</scope>
    <scope>PARTIAL PROTEIN SEQUENCE</scope>
    <source>
        <strain>cv. Harosoy 63</strain>
    </source>
</reference>
<protein>
    <recommendedName>
        <fullName>NAD(P)H-dependent 6'-deoxychalcone synthase</fullName>
        <ecNumber>2.3.1.170</ecNumber>
    </recommendedName>
</protein>